<gene>
    <name evidence="1" type="primary">tsaD</name>
    <name type="synonym">gcp</name>
    <name type="ordered locus">Rfer_2068</name>
</gene>
<name>TSAD_ALBFT</name>
<sequence length="354" mass="36781">MRVLGIESSCDETGVALVEVRGSVLPVLLADALYSQIEMHQAYGGVVPELASRDHIRRVLPLTEQVLAASGRTLADIDVVAFTRGPGLAGALLVGAGVACALGAALGKPVLGVHHLEGHLLSPFLSADPPEFPFVALLVSGGHTQLMRVDGVGRYELLGETIDDAAGEAFDKSAKLLGLAYPGGPALSRLAEQGDATAFKLPRPLLKSGNLDFSFAGLKTAVMVQAKKLAAAQDGSVEALPVQVLADLAASTQAAIVEVLVKKSMTALSQTSLKRLVVAGGVGANRSLRAQLNAECGKRGVRVHYPELHLCTDNGAMIAMAAAMRLQSGQQAASEVYAFDVRPRWPLGDLTASA</sequence>
<reference key="1">
    <citation type="submission" date="2006-02" db="EMBL/GenBank/DDBJ databases">
        <title>Complete sequence of chromosome of Rhodoferax ferrireducens DSM 15236.</title>
        <authorList>
            <person name="Copeland A."/>
            <person name="Lucas S."/>
            <person name="Lapidus A."/>
            <person name="Barry K."/>
            <person name="Detter J.C."/>
            <person name="Glavina del Rio T."/>
            <person name="Hammon N."/>
            <person name="Israni S."/>
            <person name="Pitluck S."/>
            <person name="Brettin T."/>
            <person name="Bruce D."/>
            <person name="Han C."/>
            <person name="Tapia R."/>
            <person name="Gilna P."/>
            <person name="Kiss H."/>
            <person name="Schmutz J."/>
            <person name="Larimer F."/>
            <person name="Land M."/>
            <person name="Kyrpides N."/>
            <person name="Ivanova N."/>
            <person name="Richardson P."/>
        </authorList>
    </citation>
    <scope>NUCLEOTIDE SEQUENCE [LARGE SCALE GENOMIC DNA]</scope>
    <source>
        <strain>ATCC BAA-621 / DSM 15236 / T118</strain>
    </source>
</reference>
<dbReference type="EC" id="2.3.1.234" evidence="1"/>
<dbReference type="EMBL" id="CP000267">
    <property type="protein sequence ID" value="ABD69793.1"/>
    <property type="status" value="ALT_INIT"/>
    <property type="molecule type" value="Genomic_DNA"/>
</dbReference>
<dbReference type="RefSeq" id="WP_041791950.1">
    <property type="nucleotide sequence ID" value="NC_007908.1"/>
</dbReference>
<dbReference type="SMR" id="Q21WR0"/>
<dbReference type="STRING" id="338969.Rfer_2068"/>
<dbReference type="KEGG" id="rfr:Rfer_2068"/>
<dbReference type="eggNOG" id="COG0533">
    <property type="taxonomic scope" value="Bacteria"/>
</dbReference>
<dbReference type="HOGENOM" id="CLU_023208_0_2_4"/>
<dbReference type="OrthoDB" id="9806197at2"/>
<dbReference type="Proteomes" id="UP000008332">
    <property type="component" value="Chromosome"/>
</dbReference>
<dbReference type="GO" id="GO:0005737">
    <property type="term" value="C:cytoplasm"/>
    <property type="evidence" value="ECO:0007669"/>
    <property type="project" value="UniProtKB-SubCell"/>
</dbReference>
<dbReference type="GO" id="GO:0005506">
    <property type="term" value="F:iron ion binding"/>
    <property type="evidence" value="ECO:0007669"/>
    <property type="project" value="UniProtKB-UniRule"/>
</dbReference>
<dbReference type="GO" id="GO:0061711">
    <property type="term" value="F:N(6)-L-threonylcarbamoyladenine synthase activity"/>
    <property type="evidence" value="ECO:0007669"/>
    <property type="project" value="UniProtKB-EC"/>
</dbReference>
<dbReference type="GO" id="GO:0002949">
    <property type="term" value="P:tRNA threonylcarbamoyladenosine modification"/>
    <property type="evidence" value="ECO:0007669"/>
    <property type="project" value="UniProtKB-UniRule"/>
</dbReference>
<dbReference type="CDD" id="cd24133">
    <property type="entry name" value="ASKHA_NBD_TsaD_bac"/>
    <property type="match status" value="1"/>
</dbReference>
<dbReference type="FunFam" id="3.30.420.40:FF:000012">
    <property type="entry name" value="tRNA N6-adenosine threonylcarbamoyltransferase"/>
    <property type="match status" value="1"/>
</dbReference>
<dbReference type="FunFam" id="3.30.420.40:FF:000040">
    <property type="entry name" value="tRNA N6-adenosine threonylcarbamoyltransferase"/>
    <property type="match status" value="1"/>
</dbReference>
<dbReference type="Gene3D" id="3.30.420.40">
    <property type="match status" value="2"/>
</dbReference>
<dbReference type="HAMAP" id="MF_01445">
    <property type="entry name" value="TsaD"/>
    <property type="match status" value="1"/>
</dbReference>
<dbReference type="InterPro" id="IPR043129">
    <property type="entry name" value="ATPase_NBD"/>
</dbReference>
<dbReference type="InterPro" id="IPR000905">
    <property type="entry name" value="Gcp-like_dom"/>
</dbReference>
<dbReference type="InterPro" id="IPR017861">
    <property type="entry name" value="KAE1/TsaD"/>
</dbReference>
<dbReference type="InterPro" id="IPR017860">
    <property type="entry name" value="Peptidase_M22_CS"/>
</dbReference>
<dbReference type="InterPro" id="IPR022450">
    <property type="entry name" value="TsaD"/>
</dbReference>
<dbReference type="NCBIfam" id="TIGR00329">
    <property type="entry name" value="gcp_kae1"/>
    <property type="match status" value="1"/>
</dbReference>
<dbReference type="NCBIfam" id="TIGR03723">
    <property type="entry name" value="T6A_TsaD_YgjD"/>
    <property type="match status" value="1"/>
</dbReference>
<dbReference type="PANTHER" id="PTHR11735">
    <property type="entry name" value="TRNA N6-ADENOSINE THREONYLCARBAMOYLTRANSFERASE"/>
    <property type="match status" value="1"/>
</dbReference>
<dbReference type="PANTHER" id="PTHR11735:SF6">
    <property type="entry name" value="TRNA N6-ADENOSINE THREONYLCARBAMOYLTRANSFERASE, MITOCHONDRIAL"/>
    <property type="match status" value="1"/>
</dbReference>
<dbReference type="Pfam" id="PF00814">
    <property type="entry name" value="TsaD"/>
    <property type="match status" value="1"/>
</dbReference>
<dbReference type="PRINTS" id="PR00789">
    <property type="entry name" value="OSIALOPTASE"/>
</dbReference>
<dbReference type="SUPFAM" id="SSF53067">
    <property type="entry name" value="Actin-like ATPase domain"/>
    <property type="match status" value="2"/>
</dbReference>
<dbReference type="PROSITE" id="PS01016">
    <property type="entry name" value="GLYCOPROTEASE"/>
    <property type="match status" value="1"/>
</dbReference>
<keyword id="KW-0012">Acyltransferase</keyword>
<keyword id="KW-0963">Cytoplasm</keyword>
<keyword id="KW-0408">Iron</keyword>
<keyword id="KW-0479">Metal-binding</keyword>
<keyword id="KW-1185">Reference proteome</keyword>
<keyword id="KW-0808">Transferase</keyword>
<keyword id="KW-0819">tRNA processing</keyword>
<protein>
    <recommendedName>
        <fullName evidence="1">tRNA N6-adenosine threonylcarbamoyltransferase</fullName>
        <ecNumber evidence="1">2.3.1.234</ecNumber>
    </recommendedName>
    <alternativeName>
        <fullName evidence="1">N6-L-threonylcarbamoyladenine synthase</fullName>
        <shortName evidence="1">t(6)A synthase</shortName>
    </alternativeName>
    <alternativeName>
        <fullName evidence="1">t(6)A37 threonylcarbamoyladenosine biosynthesis protein TsaD</fullName>
    </alternativeName>
    <alternativeName>
        <fullName evidence="1">tRNA threonylcarbamoyladenosine biosynthesis protein TsaD</fullName>
    </alternativeName>
</protein>
<comment type="function">
    <text evidence="1">Required for the formation of a threonylcarbamoyl group on adenosine at position 37 (t(6)A37) in tRNAs that read codons beginning with adenine. Is involved in the transfer of the threonylcarbamoyl moiety of threonylcarbamoyl-AMP (TC-AMP) to the N6 group of A37, together with TsaE and TsaB. TsaD likely plays a direct catalytic role in this reaction.</text>
</comment>
<comment type="catalytic activity">
    <reaction evidence="1">
        <text>L-threonylcarbamoyladenylate + adenosine(37) in tRNA = N(6)-L-threonylcarbamoyladenosine(37) in tRNA + AMP + H(+)</text>
        <dbReference type="Rhea" id="RHEA:37059"/>
        <dbReference type="Rhea" id="RHEA-COMP:10162"/>
        <dbReference type="Rhea" id="RHEA-COMP:10163"/>
        <dbReference type="ChEBI" id="CHEBI:15378"/>
        <dbReference type="ChEBI" id="CHEBI:73682"/>
        <dbReference type="ChEBI" id="CHEBI:74411"/>
        <dbReference type="ChEBI" id="CHEBI:74418"/>
        <dbReference type="ChEBI" id="CHEBI:456215"/>
        <dbReference type="EC" id="2.3.1.234"/>
    </reaction>
</comment>
<comment type="cofactor">
    <cofactor evidence="1">
        <name>Fe(2+)</name>
        <dbReference type="ChEBI" id="CHEBI:29033"/>
    </cofactor>
    <text evidence="1">Binds 1 Fe(2+) ion per subunit.</text>
</comment>
<comment type="subcellular location">
    <subcellularLocation>
        <location evidence="1">Cytoplasm</location>
    </subcellularLocation>
</comment>
<comment type="similarity">
    <text evidence="1">Belongs to the KAE1 / TsaD family.</text>
</comment>
<comment type="sequence caution" evidence="2">
    <conflict type="erroneous initiation">
        <sequence resource="EMBL-CDS" id="ABD69793"/>
    </conflict>
</comment>
<proteinExistence type="inferred from homology"/>
<evidence type="ECO:0000255" key="1">
    <source>
        <dbReference type="HAMAP-Rule" id="MF_01445"/>
    </source>
</evidence>
<evidence type="ECO:0000305" key="2"/>
<accession>Q21WR0</accession>
<feature type="chain" id="PRO_0000303514" description="tRNA N6-adenosine threonylcarbamoyltransferase">
    <location>
        <begin position="1"/>
        <end position="354"/>
    </location>
</feature>
<feature type="binding site" evidence="1">
    <location>
        <position position="115"/>
    </location>
    <ligand>
        <name>Fe cation</name>
        <dbReference type="ChEBI" id="CHEBI:24875"/>
    </ligand>
</feature>
<feature type="binding site" evidence="1">
    <location>
        <position position="119"/>
    </location>
    <ligand>
        <name>Fe cation</name>
        <dbReference type="ChEBI" id="CHEBI:24875"/>
    </ligand>
</feature>
<feature type="binding site" evidence="1">
    <location>
        <begin position="138"/>
        <end position="142"/>
    </location>
    <ligand>
        <name>substrate</name>
    </ligand>
</feature>
<feature type="binding site" evidence="1">
    <location>
        <position position="171"/>
    </location>
    <ligand>
        <name>substrate</name>
    </ligand>
</feature>
<feature type="binding site" evidence="1">
    <location>
        <position position="184"/>
    </location>
    <ligand>
        <name>substrate</name>
    </ligand>
</feature>
<feature type="binding site" evidence="1">
    <location>
        <position position="285"/>
    </location>
    <ligand>
        <name>substrate</name>
    </ligand>
</feature>
<feature type="binding site" evidence="1">
    <location>
        <position position="313"/>
    </location>
    <ligand>
        <name>Fe cation</name>
        <dbReference type="ChEBI" id="CHEBI:24875"/>
    </ligand>
</feature>
<organism>
    <name type="scientific">Albidiferax ferrireducens (strain ATCC BAA-621 / DSM 15236 / T118)</name>
    <name type="common">Rhodoferax ferrireducens</name>
    <dbReference type="NCBI Taxonomy" id="338969"/>
    <lineage>
        <taxon>Bacteria</taxon>
        <taxon>Pseudomonadati</taxon>
        <taxon>Pseudomonadota</taxon>
        <taxon>Betaproteobacteria</taxon>
        <taxon>Burkholderiales</taxon>
        <taxon>Comamonadaceae</taxon>
        <taxon>Rhodoferax</taxon>
    </lineage>
</organism>